<comment type="function">
    <text evidence="1">Catalyzes the attachment of serine to tRNA(Ser). Is also able to aminoacylate tRNA(Sec) with serine, to form the misacylated tRNA L-seryl-tRNA(Sec), which will be further converted into selenocysteinyl-tRNA(Sec).</text>
</comment>
<comment type="catalytic activity">
    <reaction evidence="1">
        <text>tRNA(Ser) + L-serine + ATP = L-seryl-tRNA(Ser) + AMP + diphosphate + H(+)</text>
        <dbReference type="Rhea" id="RHEA:12292"/>
        <dbReference type="Rhea" id="RHEA-COMP:9669"/>
        <dbReference type="Rhea" id="RHEA-COMP:9703"/>
        <dbReference type="ChEBI" id="CHEBI:15378"/>
        <dbReference type="ChEBI" id="CHEBI:30616"/>
        <dbReference type="ChEBI" id="CHEBI:33019"/>
        <dbReference type="ChEBI" id="CHEBI:33384"/>
        <dbReference type="ChEBI" id="CHEBI:78442"/>
        <dbReference type="ChEBI" id="CHEBI:78533"/>
        <dbReference type="ChEBI" id="CHEBI:456215"/>
        <dbReference type="EC" id="6.1.1.11"/>
    </reaction>
</comment>
<comment type="catalytic activity">
    <reaction evidence="1">
        <text>tRNA(Sec) + L-serine + ATP = L-seryl-tRNA(Sec) + AMP + diphosphate + H(+)</text>
        <dbReference type="Rhea" id="RHEA:42580"/>
        <dbReference type="Rhea" id="RHEA-COMP:9742"/>
        <dbReference type="Rhea" id="RHEA-COMP:10128"/>
        <dbReference type="ChEBI" id="CHEBI:15378"/>
        <dbReference type="ChEBI" id="CHEBI:30616"/>
        <dbReference type="ChEBI" id="CHEBI:33019"/>
        <dbReference type="ChEBI" id="CHEBI:33384"/>
        <dbReference type="ChEBI" id="CHEBI:78442"/>
        <dbReference type="ChEBI" id="CHEBI:78533"/>
        <dbReference type="ChEBI" id="CHEBI:456215"/>
        <dbReference type="EC" id="6.1.1.11"/>
    </reaction>
</comment>
<comment type="pathway">
    <text evidence="1">Aminoacyl-tRNA biosynthesis; selenocysteinyl-tRNA(Sec) biosynthesis; L-seryl-tRNA(Sec) from L-serine and tRNA(Sec): step 1/1.</text>
</comment>
<comment type="subunit">
    <text evidence="1">Homodimer. The tRNA molecule binds across the dimer.</text>
</comment>
<comment type="subcellular location">
    <subcellularLocation>
        <location evidence="1">Cytoplasm</location>
    </subcellularLocation>
</comment>
<comment type="domain">
    <text evidence="1">Consists of two distinct domains, a catalytic core and a N-terminal extension that is involved in tRNA binding.</text>
</comment>
<comment type="similarity">
    <text evidence="1">Belongs to the class-II aminoacyl-tRNA synthetase family. Type-1 seryl-tRNA synthetase subfamily.</text>
</comment>
<gene>
    <name evidence="1" type="primary">serS</name>
    <name type="ordered locus">Mmc1_1073</name>
</gene>
<accession>A0L6J8</accession>
<evidence type="ECO:0000255" key="1">
    <source>
        <dbReference type="HAMAP-Rule" id="MF_00176"/>
    </source>
</evidence>
<dbReference type="EC" id="6.1.1.11" evidence="1"/>
<dbReference type="EMBL" id="CP000471">
    <property type="protein sequence ID" value="ABK43591.1"/>
    <property type="molecule type" value="Genomic_DNA"/>
</dbReference>
<dbReference type="RefSeq" id="WP_011712748.1">
    <property type="nucleotide sequence ID" value="NC_008576.1"/>
</dbReference>
<dbReference type="SMR" id="A0L6J8"/>
<dbReference type="STRING" id="156889.Mmc1_1073"/>
<dbReference type="KEGG" id="mgm:Mmc1_1073"/>
<dbReference type="eggNOG" id="COG0172">
    <property type="taxonomic scope" value="Bacteria"/>
</dbReference>
<dbReference type="HOGENOM" id="CLU_023797_1_1_5"/>
<dbReference type="OrthoDB" id="9804647at2"/>
<dbReference type="UniPathway" id="UPA00906">
    <property type="reaction ID" value="UER00895"/>
</dbReference>
<dbReference type="Proteomes" id="UP000002586">
    <property type="component" value="Chromosome"/>
</dbReference>
<dbReference type="GO" id="GO:0005737">
    <property type="term" value="C:cytoplasm"/>
    <property type="evidence" value="ECO:0007669"/>
    <property type="project" value="UniProtKB-SubCell"/>
</dbReference>
<dbReference type="GO" id="GO:0005524">
    <property type="term" value="F:ATP binding"/>
    <property type="evidence" value="ECO:0007669"/>
    <property type="project" value="UniProtKB-UniRule"/>
</dbReference>
<dbReference type="GO" id="GO:0004828">
    <property type="term" value="F:serine-tRNA ligase activity"/>
    <property type="evidence" value="ECO:0007669"/>
    <property type="project" value="UniProtKB-UniRule"/>
</dbReference>
<dbReference type="GO" id="GO:0016260">
    <property type="term" value="P:selenocysteine biosynthetic process"/>
    <property type="evidence" value="ECO:0007669"/>
    <property type="project" value="UniProtKB-UniRule"/>
</dbReference>
<dbReference type="GO" id="GO:0006434">
    <property type="term" value="P:seryl-tRNA aminoacylation"/>
    <property type="evidence" value="ECO:0007669"/>
    <property type="project" value="UniProtKB-UniRule"/>
</dbReference>
<dbReference type="CDD" id="cd00770">
    <property type="entry name" value="SerRS_core"/>
    <property type="match status" value="1"/>
</dbReference>
<dbReference type="Gene3D" id="3.30.930.10">
    <property type="entry name" value="Bira Bifunctional Protein, Domain 2"/>
    <property type="match status" value="1"/>
</dbReference>
<dbReference type="Gene3D" id="1.10.287.40">
    <property type="entry name" value="Serine-tRNA synthetase, tRNA binding domain"/>
    <property type="match status" value="1"/>
</dbReference>
<dbReference type="HAMAP" id="MF_00176">
    <property type="entry name" value="Ser_tRNA_synth_type1"/>
    <property type="match status" value="1"/>
</dbReference>
<dbReference type="InterPro" id="IPR002314">
    <property type="entry name" value="aa-tRNA-synt_IIb"/>
</dbReference>
<dbReference type="InterPro" id="IPR006195">
    <property type="entry name" value="aa-tRNA-synth_II"/>
</dbReference>
<dbReference type="InterPro" id="IPR045864">
    <property type="entry name" value="aa-tRNA-synth_II/BPL/LPL"/>
</dbReference>
<dbReference type="InterPro" id="IPR002317">
    <property type="entry name" value="Ser-tRNA-ligase_type_1"/>
</dbReference>
<dbReference type="InterPro" id="IPR015866">
    <property type="entry name" value="Ser-tRNA-synth_1_N"/>
</dbReference>
<dbReference type="InterPro" id="IPR042103">
    <property type="entry name" value="SerRS_1_N_sf"/>
</dbReference>
<dbReference type="InterPro" id="IPR033729">
    <property type="entry name" value="SerRS_core"/>
</dbReference>
<dbReference type="InterPro" id="IPR010978">
    <property type="entry name" value="tRNA-bd_arm"/>
</dbReference>
<dbReference type="NCBIfam" id="TIGR00414">
    <property type="entry name" value="serS"/>
    <property type="match status" value="1"/>
</dbReference>
<dbReference type="PANTHER" id="PTHR43697:SF1">
    <property type="entry name" value="SERINE--TRNA LIGASE"/>
    <property type="match status" value="1"/>
</dbReference>
<dbReference type="PANTHER" id="PTHR43697">
    <property type="entry name" value="SERYL-TRNA SYNTHETASE"/>
    <property type="match status" value="1"/>
</dbReference>
<dbReference type="Pfam" id="PF02403">
    <property type="entry name" value="Seryl_tRNA_N"/>
    <property type="match status" value="1"/>
</dbReference>
<dbReference type="Pfam" id="PF00587">
    <property type="entry name" value="tRNA-synt_2b"/>
    <property type="match status" value="1"/>
</dbReference>
<dbReference type="PIRSF" id="PIRSF001529">
    <property type="entry name" value="Ser-tRNA-synth_IIa"/>
    <property type="match status" value="1"/>
</dbReference>
<dbReference type="PRINTS" id="PR00981">
    <property type="entry name" value="TRNASYNTHSER"/>
</dbReference>
<dbReference type="SUPFAM" id="SSF55681">
    <property type="entry name" value="Class II aaRS and biotin synthetases"/>
    <property type="match status" value="1"/>
</dbReference>
<dbReference type="SUPFAM" id="SSF46589">
    <property type="entry name" value="tRNA-binding arm"/>
    <property type="match status" value="1"/>
</dbReference>
<dbReference type="PROSITE" id="PS50862">
    <property type="entry name" value="AA_TRNA_LIGASE_II"/>
    <property type="match status" value="1"/>
</dbReference>
<protein>
    <recommendedName>
        <fullName evidence="1">Serine--tRNA ligase</fullName>
        <ecNumber evidence="1">6.1.1.11</ecNumber>
    </recommendedName>
    <alternativeName>
        <fullName evidence="1">Seryl-tRNA synthetase</fullName>
        <shortName evidence="1">SerRS</shortName>
    </alternativeName>
    <alternativeName>
        <fullName evidence="1">Seryl-tRNA(Ser/Sec) synthetase</fullName>
    </alternativeName>
</protein>
<feature type="chain" id="PRO_1000019722" description="Serine--tRNA ligase">
    <location>
        <begin position="1"/>
        <end position="430"/>
    </location>
</feature>
<feature type="binding site" evidence="1">
    <location>
        <begin position="237"/>
        <end position="239"/>
    </location>
    <ligand>
        <name>L-serine</name>
        <dbReference type="ChEBI" id="CHEBI:33384"/>
    </ligand>
</feature>
<feature type="binding site" evidence="1">
    <location>
        <begin position="268"/>
        <end position="270"/>
    </location>
    <ligand>
        <name>ATP</name>
        <dbReference type="ChEBI" id="CHEBI:30616"/>
    </ligand>
</feature>
<feature type="binding site" evidence="1">
    <location>
        <position position="291"/>
    </location>
    <ligand>
        <name>L-serine</name>
        <dbReference type="ChEBI" id="CHEBI:33384"/>
    </ligand>
</feature>
<feature type="binding site" evidence="1">
    <location>
        <begin position="355"/>
        <end position="358"/>
    </location>
    <ligand>
        <name>ATP</name>
        <dbReference type="ChEBI" id="CHEBI:30616"/>
    </ligand>
</feature>
<feature type="binding site" evidence="1">
    <location>
        <position position="391"/>
    </location>
    <ligand>
        <name>L-serine</name>
        <dbReference type="ChEBI" id="CHEBI:33384"/>
    </ligand>
</feature>
<proteinExistence type="inferred from homology"/>
<keyword id="KW-0030">Aminoacyl-tRNA synthetase</keyword>
<keyword id="KW-0067">ATP-binding</keyword>
<keyword id="KW-0963">Cytoplasm</keyword>
<keyword id="KW-0436">Ligase</keyword>
<keyword id="KW-0547">Nucleotide-binding</keyword>
<keyword id="KW-0648">Protein biosynthesis</keyword>
<keyword id="KW-1185">Reference proteome</keyword>
<organism>
    <name type="scientific">Magnetococcus marinus (strain ATCC BAA-1437 / JCM 17883 / MC-1)</name>
    <dbReference type="NCBI Taxonomy" id="156889"/>
    <lineage>
        <taxon>Bacteria</taxon>
        <taxon>Pseudomonadati</taxon>
        <taxon>Pseudomonadota</taxon>
        <taxon>Alphaproteobacteria</taxon>
        <taxon>Magnetococcales</taxon>
        <taxon>Magnetococcaceae</taxon>
        <taxon>Magnetococcus</taxon>
    </lineage>
</organism>
<name>SYS_MAGMM</name>
<reference key="1">
    <citation type="journal article" date="2009" name="Appl. Environ. Microbiol.">
        <title>Complete genome sequence of the chemolithoautotrophic marine magnetotactic coccus strain MC-1.</title>
        <authorList>
            <person name="Schubbe S."/>
            <person name="Williams T.J."/>
            <person name="Xie G."/>
            <person name="Kiss H.E."/>
            <person name="Brettin T.S."/>
            <person name="Martinez D."/>
            <person name="Ross C.A."/>
            <person name="Schuler D."/>
            <person name="Cox B.L."/>
            <person name="Nealson K.H."/>
            <person name="Bazylinski D.A."/>
        </authorList>
    </citation>
    <scope>NUCLEOTIDE SEQUENCE [LARGE SCALE GENOMIC DNA]</scope>
    <source>
        <strain>ATCC BAA-1437 / JCM 17883 / MC-1</strain>
    </source>
</reference>
<sequence>MLDIKRIRTETDAVEAALQRRGGAVDLNAFRALEGRKRTIQTEVEQLQSQRNTLSKEIGQRKAAREDASDLFEQMQRVGPRLKELESVLAELEGQVEAIIVALPNTPHSSVPDGLGEQDNVEVRRWSPSGGEGGDPQVLGFEAKNHWEIGEALGILDFEAGAAVAGSRFTVFKGVGARLSRALANYMLDLHTGSHGYQEILPPVLTNAECLFGTGQLPKFEEDLFRTRDDAYYMIPTAEVPVTNLVREQILEDSQLPMRMTAWTNCFRREAGSAGKDTRGLIRQHQFDKVELVQIRRPEESYAALEELTGHAEQVLKGLGLPFRTVVLCSGDMGFGASKTYDIEVWLPGQGKYREISSCSNTEDFQARRMKARFRREAKGKPELVHTLNGSGVAVGRALVAVLENYQQADGRVVVPEVLRPYMGGLEIIG</sequence>